<organism>
    <name type="scientific">Hyphomonas neptunium (strain ATCC 15444)</name>
    <dbReference type="NCBI Taxonomy" id="228405"/>
    <lineage>
        <taxon>Bacteria</taxon>
        <taxon>Pseudomonadati</taxon>
        <taxon>Pseudomonadota</taxon>
        <taxon>Alphaproteobacteria</taxon>
        <taxon>Hyphomonadales</taxon>
        <taxon>Hyphomonadaceae</taxon>
        <taxon>Hyphomonas</taxon>
    </lineage>
</organism>
<reference key="1">
    <citation type="journal article" date="2006" name="J. Bacteriol.">
        <title>Comparative genomic evidence for a close relationship between the dimorphic prosthecate bacteria Hyphomonas neptunium and Caulobacter crescentus.</title>
        <authorList>
            <person name="Badger J.H."/>
            <person name="Hoover T.R."/>
            <person name="Brun Y.V."/>
            <person name="Weiner R.M."/>
            <person name="Laub M.T."/>
            <person name="Alexandre G."/>
            <person name="Mrazek J."/>
            <person name="Ren Q."/>
            <person name="Paulsen I.T."/>
            <person name="Nelson K.E."/>
            <person name="Khouri H.M."/>
            <person name="Radune D."/>
            <person name="Sosa J."/>
            <person name="Dodson R.J."/>
            <person name="Sullivan S.A."/>
            <person name="Rosovitz M.J."/>
            <person name="Madupu R."/>
            <person name="Brinkac L.M."/>
            <person name="Durkin A.S."/>
            <person name="Daugherty S.C."/>
            <person name="Kothari S.P."/>
            <person name="Giglio M.G."/>
            <person name="Zhou L."/>
            <person name="Haft D.H."/>
            <person name="Selengut J.D."/>
            <person name="Davidsen T.M."/>
            <person name="Yang Q."/>
            <person name="Zafar N."/>
            <person name="Ward N.L."/>
        </authorList>
    </citation>
    <scope>NUCLEOTIDE SEQUENCE [LARGE SCALE GENOMIC DNA]</scope>
    <source>
        <strain>ATCC 15444</strain>
    </source>
</reference>
<name>RL27_HYPNA</name>
<feature type="chain" id="PRO_1000017499" description="Large ribosomal subunit protein bL27">
    <location>
        <begin position="1"/>
        <end position="89"/>
    </location>
</feature>
<feature type="region of interest" description="Disordered" evidence="2">
    <location>
        <begin position="1"/>
        <end position="21"/>
    </location>
</feature>
<keyword id="KW-1185">Reference proteome</keyword>
<keyword id="KW-0687">Ribonucleoprotein</keyword>
<keyword id="KW-0689">Ribosomal protein</keyword>
<comment type="similarity">
    <text evidence="1">Belongs to the bacterial ribosomal protein bL27 family.</text>
</comment>
<dbReference type="EMBL" id="CP000158">
    <property type="protein sequence ID" value="ABI78592.1"/>
    <property type="molecule type" value="Genomic_DNA"/>
</dbReference>
<dbReference type="RefSeq" id="WP_011647550.1">
    <property type="nucleotide sequence ID" value="NC_008358.1"/>
</dbReference>
<dbReference type="SMR" id="Q0BZ41"/>
<dbReference type="STRING" id="228405.HNE_2560"/>
<dbReference type="KEGG" id="hne:HNE_2560"/>
<dbReference type="eggNOG" id="COG0211">
    <property type="taxonomic scope" value="Bacteria"/>
</dbReference>
<dbReference type="HOGENOM" id="CLU_095424_4_1_5"/>
<dbReference type="Proteomes" id="UP000001959">
    <property type="component" value="Chromosome"/>
</dbReference>
<dbReference type="GO" id="GO:0022625">
    <property type="term" value="C:cytosolic large ribosomal subunit"/>
    <property type="evidence" value="ECO:0007669"/>
    <property type="project" value="TreeGrafter"/>
</dbReference>
<dbReference type="GO" id="GO:0003735">
    <property type="term" value="F:structural constituent of ribosome"/>
    <property type="evidence" value="ECO:0007669"/>
    <property type="project" value="InterPro"/>
</dbReference>
<dbReference type="GO" id="GO:0006412">
    <property type="term" value="P:translation"/>
    <property type="evidence" value="ECO:0007669"/>
    <property type="project" value="UniProtKB-UniRule"/>
</dbReference>
<dbReference type="FunFam" id="2.40.50.100:FF:000020">
    <property type="entry name" value="50S ribosomal protein L27"/>
    <property type="match status" value="1"/>
</dbReference>
<dbReference type="Gene3D" id="2.40.50.100">
    <property type="match status" value="1"/>
</dbReference>
<dbReference type="HAMAP" id="MF_00539">
    <property type="entry name" value="Ribosomal_bL27"/>
    <property type="match status" value="1"/>
</dbReference>
<dbReference type="InterPro" id="IPR001684">
    <property type="entry name" value="Ribosomal_bL27"/>
</dbReference>
<dbReference type="InterPro" id="IPR018261">
    <property type="entry name" value="Ribosomal_bL27_CS"/>
</dbReference>
<dbReference type="NCBIfam" id="TIGR00062">
    <property type="entry name" value="L27"/>
    <property type="match status" value="1"/>
</dbReference>
<dbReference type="PANTHER" id="PTHR15893:SF0">
    <property type="entry name" value="LARGE RIBOSOMAL SUBUNIT PROTEIN BL27M"/>
    <property type="match status" value="1"/>
</dbReference>
<dbReference type="PANTHER" id="PTHR15893">
    <property type="entry name" value="RIBOSOMAL PROTEIN L27"/>
    <property type="match status" value="1"/>
</dbReference>
<dbReference type="Pfam" id="PF01016">
    <property type="entry name" value="Ribosomal_L27"/>
    <property type="match status" value="1"/>
</dbReference>
<dbReference type="PRINTS" id="PR00063">
    <property type="entry name" value="RIBOSOMALL27"/>
</dbReference>
<dbReference type="SUPFAM" id="SSF110324">
    <property type="entry name" value="Ribosomal L27 protein-like"/>
    <property type="match status" value="1"/>
</dbReference>
<dbReference type="PROSITE" id="PS00831">
    <property type="entry name" value="RIBOSOMAL_L27"/>
    <property type="match status" value="1"/>
</dbReference>
<accession>Q0BZ41</accession>
<sequence length="89" mass="9514">MAHKKSGGSSRNGRDSNPKYLGVKKYGGEVVVPGMIIVRQRGTVKWPGKGVGMGKDHTLFALKGGKVEYAHKSGGRIYVNIVQMADAAE</sequence>
<gene>
    <name evidence="1" type="primary">rpmA</name>
    <name type="ordered locus">HNE_2560</name>
</gene>
<proteinExistence type="inferred from homology"/>
<protein>
    <recommendedName>
        <fullName evidence="1">Large ribosomal subunit protein bL27</fullName>
    </recommendedName>
    <alternativeName>
        <fullName evidence="3">50S ribosomal protein L27</fullName>
    </alternativeName>
</protein>
<evidence type="ECO:0000255" key="1">
    <source>
        <dbReference type="HAMAP-Rule" id="MF_00539"/>
    </source>
</evidence>
<evidence type="ECO:0000256" key="2">
    <source>
        <dbReference type="SAM" id="MobiDB-lite"/>
    </source>
</evidence>
<evidence type="ECO:0000305" key="3"/>